<gene>
    <name evidence="1" type="primary">mraZ</name>
    <name type="ordered locus">BURPS668_3534</name>
</gene>
<sequence>MFQGASALTLDAKGRMSVPSRYREALQGQAEGRVTVTKHPDGCLLLFPRPEWEVFRAKIAALPMDAHWWRRIFLGNAMDVDLDSAGRILVSPELRMAAGLEKEVMLLGMGSHFELWDAQTYTAKEQAAMAQGMPEALKNFTF</sequence>
<evidence type="ECO:0000255" key="1">
    <source>
        <dbReference type="HAMAP-Rule" id="MF_01008"/>
    </source>
</evidence>
<evidence type="ECO:0000255" key="2">
    <source>
        <dbReference type="PROSITE-ProRule" id="PRU01076"/>
    </source>
</evidence>
<keyword id="KW-0963">Cytoplasm</keyword>
<keyword id="KW-0238">DNA-binding</keyword>
<keyword id="KW-0677">Repeat</keyword>
<keyword id="KW-0804">Transcription</keyword>
<keyword id="KW-0805">Transcription regulation</keyword>
<comment type="subunit">
    <text evidence="1">Forms oligomers.</text>
</comment>
<comment type="subcellular location">
    <subcellularLocation>
        <location evidence="1">Cytoplasm</location>
        <location evidence="1">Nucleoid</location>
    </subcellularLocation>
</comment>
<comment type="similarity">
    <text evidence="1">Belongs to the MraZ family.</text>
</comment>
<dbReference type="EMBL" id="CP000570">
    <property type="protein sequence ID" value="ABN84174.1"/>
    <property type="molecule type" value="Genomic_DNA"/>
</dbReference>
<dbReference type="RefSeq" id="WP_004194130.1">
    <property type="nucleotide sequence ID" value="NC_009074.1"/>
</dbReference>
<dbReference type="SMR" id="A3NDX3"/>
<dbReference type="GeneID" id="93061636"/>
<dbReference type="KEGG" id="bpd:BURPS668_3534"/>
<dbReference type="HOGENOM" id="CLU_107907_2_1_4"/>
<dbReference type="GO" id="GO:0005737">
    <property type="term" value="C:cytoplasm"/>
    <property type="evidence" value="ECO:0007669"/>
    <property type="project" value="UniProtKB-UniRule"/>
</dbReference>
<dbReference type="GO" id="GO:0009295">
    <property type="term" value="C:nucleoid"/>
    <property type="evidence" value="ECO:0007669"/>
    <property type="project" value="UniProtKB-SubCell"/>
</dbReference>
<dbReference type="GO" id="GO:0003700">
    <property type="term" value="F:DNA-binding transcription factor activity"/>
    <property type="evidence" value="ECO:0007669"/>
    <property type="project" value="UniProtKB-UniRule"/>
</dbReference>
<dbReference type="GO" id="GO:0000976">
    <property type="term" value="F:transcription cis-regulatory region binding"/>
    <property type="evidence" value="ECO:0007669"/>
    <property type="project" value="TreeGrafter"/>
</dbReference>
<dbReference type="GO" id="GO:2000143">
    <property type="term" value="P:negative regulation of DNA-templated transcription initiation"/>
    <property type="evidence" value="ECO:0007669"/>
    <property type="project" value="TreeGrafter"/>
</dbReference>
<dbReference type="CDD" id="cd16321">
    <property type="entry name" value="MraZ_C"/>
    <property type="match status" value="1"/>
</dbReference>
<dbReference type="CDD" id="cd16320">
    <property type="entry name" value="MraZ_N"/>
    <property type="match status" value="1"/>
</dbReference>
<dbReference type="Gene3D" id="3.40.1550.20">
    <property type="entry name" value="Transcriptional regulator MraZ domain"/>
    <property type="match status" value="1"/>
</dbReference>
<dbReference type="HAMAP" id="MF_01008">
    <property type="entry name" value="MraZ"/>
    <property type="match status" value="1"/>
</dbReference>
<dbReference type="InterPro" id="IPR003444">
    <property type="entry name" value="MraZ"/>
</dbReference>
<dbReference type="InterPro" id="IPR035644">
    <property type="entry name" value="MraZ_C"/>
</dbReference>
<dbReference type="InterPro" id="IPR020603">
    <property type="entry name" value="MraZ_dom"/>
</dbReference>
<dbReference type="InterPro" id="IPR035642">
    <property type="entry name" value="MraZ_N"/>
</dbReference>
<dbReference type="InterPro" id="IPR038619">
    <property type="entry name" value="MraZ_sf"/>
</dbReference>
<dbReference type="InterPro" id="IPR007159">
    <property type="entry name" value="SpoVT-AbrB_dom"/>
</dbReference>
<dbReference type="InterPro" id="IPR037914">
    <property type="entry name" value="SpoVT-AbrB_sf"/>
</dbReference>
<dbReference type="NCBIfam" id="TIGR00242">
    <property type="entry name" value="division/cell wall cluster transcriptional repressor MraZ"/>
    <property type="match status" value="1"/>
</dbReference>
<dbReference type="PANTHER" id="PTHR34701">
    <property type="entry name" value="TRANSCRIPTIONAL REGULATOR MRAZ"/>
    <property type="match status" value="1"/>
</dbReference>
<dbReference type="PANTHER" id="PTHR34701:SF1">
    <property type="entry name" value="TRANSCRIPTIONAL REGULATOR MRAZ"/>
    <property type="match status" value="1"/>
</dbReference>
<dbReference type="Pfam" id="PF02381">
    <property type="entry name" value="MraZ"/>
    <property type="match status" value="2"/>
</dbReference>
<dbReference type="SUPFAM" id="SSF89447">
    <property type="entry name" value="AbrB/MazE/MraZ-like"/>
    <property type="match status" value="1"/>
</dbReference>
<dbReference type="PROSITE" id="PS51740">
    <property type="entry name" value="SPOVT_ABRB"/>
    <property type="match status" value="2"/>
</dbReference>
<protein>
    <recommendedName>
        <fullName>Transcriptional regulator MraZ</fullName>
    </recommendedName>
</protein>
<accession>A3NDX3</accession>
<organism>
    <name type="scientific">Burkholderia pseudomallei (strain 668)</name>
    <dbReference type="NCBI Taxonomy" id="320373"/>
    <lineage>
        <taxon>Bacteria</taxon>
        <taxon>Pseudomonadati</taxon>
        <taxon>Pseudomonadota</taxon>
        <taxon>Betaproteobacteria</taxon>
        <taxon>Burkholderiales</taxon>
        <taxon>Burkholderiaceae</taxon>
        <taxon>Burkholderia</taxon>
        <taxon>pseudomallei group</taxon>
    </lineage>
</organism>
<reference key="1">
    <citation type="journal article" date="2010" name="Genome Biol. Evol.">
        <title>Continuing evolution of Burkholderia mallei through genome reduction and large-scale rearrangements.</title>
        <authorList>
            <person name="Losada L."/>
            <person name="Ronning C.M."/>
            <person name="DeShazer D."/>
            <person name="Woods D."/>
            <person name="Fedorova N."/>
            <person name="Kim H.S."/>
            <person name="Shabalina S.A."/>
            <person name="Pearson T.R."/>
            <person name="Brinkac L."/>
            <person name="Tan P."/>
            <person name="Nandi T."/>
            <person name="Crabtree J."/>
            <person name="Badger J."/>
            <person name="Beckstrom-Sternberg S."/>
            <person name="Saqib M."/>
            <person name="Schutzer S.E."/>
            <person name="Keim P."/>
            <person name="Nierman W.C."/>
        </authorList>
    </citation>
    <scope>NUCLEOTIDE SEQUENCE [LARGE SCALE GENOMIC DNA]</scope>
    <source>
        <strain>668</strain>
    </source>
</reference>
<proteinExistence type="inferred from homology"/>
<name>MRAZ_BURP6</name>
<feature type="chain" id="PRO_1000062857" description="Transcriptional regulator MraZ">
    <location>
        <begin position="1"/>
        <end position="142"/>
    </location>
</feature>
<feature type="domain" description="SpoVT-AbrB 1" evidence="2">
    <location>
        <begin position="5"/>
        <end position="51"/>
    </location>
</feature>
<feature type="domain" description="SpoVT-AbrB 2" evidence="2">
    <location>
        <begin position="77"/>
        <end position="120"/>
    </location>
</feature>